<name>NCAP_RABVH</name>
<sequence length="450" mass="50722">MDADKIVFKVNNRVVSLKPEIIVDQYEYKYPAIKDLKKPCITLGKAPDLNKAYKSVLSGMNAAKLDPDDVCSYLAAAMQFFEGTCPEDWTSYGILIARKGDKITPDSLVEIKRTDVEGNWALTGGMELTRDPTVSEHASLVGLLLSLYRLSKISGQNTGNYKTNIADRIEQIFETAPFVKIVEHHTLMTTHKMCANWSTIPNFRFLAGTYDMFFSRIEHLYSAIRVGTVVTAYEDCSGLVSFTGFIKQINLTAREAILYFFHKNFEEEIRRMFEPGQETAVPHSYFIHFRSLGLSGKSPYSSNAVGHVFNLIHFVGCYMGQVRSLNATVIAACAPHEMSVLGGYLGEEFFGKGTFERRFFRDEKELQEYEAAELTKTDVALADDGTVNSDDEDYFSGETRSPEAVYTRIMMNGGRLKRSHIRRYVSVSSNHQARPNSFAEFLNKTYSSDS</sequence>
<dbReference type="EMBL" id="AB085828">
    <property type="protein sequence ID" value="BAC53865.1"/>
    <property type="molecule type" value="Genomic_RNA"/>
</dbReference>
<dbReference type="SMR" id="Q8B6J9"/>
<dbReference type="Proteomes" id="UP000006846">
    <property type="component" value="Genome"/>
</dbReference>
<dbReference type="GO" id="GO:0019029">
    <property type="term" value="C:helical viral capsid"/>
    <property type="evidence" value="ECO:0007669"/>
    <property type="project" value="UniProtKB-KW"/>
</dbReference>
<dbReference type="GO" id="GO:0030430">
    <property type="term" value="C:host cell cytoplasm"/>
    <property type="evidence" value="ECO:0007669"/>
    <property type="project" value="UniProtKB-SubCell"/>
</dbReference>
<dbReference type="GO" id="GO:1990904">
    <property type="term" value="C:ribonucleoprotein complex"/>
    <property type="evidence" value="ECO:0007669"/>
    <property type="project" value="UniProtKB-KW"/>
</dbReference>
<dbReference type="GO" id="GO:0019013">
    <property type="term" value="C:viral nucleocapsid"/>
    <property type="evidence" value="ECO:0007669"/>
    <property type="project" value="UniProtKB-KW"/>
</dbReference>
<dbReference type="GO" id="GO:0003723">
    <property type="term" value="F:RNA binding"/>
    <property type="evidence" value="ECO:0007669"/>
    <property type="project" value="UniProtKB-KW"/>
</dbReference>
<dbReference type="Gene3D" id="1.10.3610.10">
    <property type="entry name" value="Nucleoprotein"/>
    <property type="match status" value="1"/>
</dbReference>
<dbReference type="Gene3D" id="1.10.3570.10">
    <property type="entry name" value="Rhabdovirus nucleocapsid protein like domain"/>
    <property type="match status" value="1"/>
</dbReference>
<dbReference type="InterPro" id="IPR000448">
    <property type="entry name" value="Rhabdo_ncapsid"/>
</dbReference>
<dbReference type="InterPro" id="IPR023331">
    <property type="entry name" value="Rhabdovirus_ncapsid_C"/>
</dbReference>
<dbReference type="InterPro" id="IPR023330">
    <property type="entry name" value="Rhabdovirus_ncapsid_N"/>
</dbReference>
<dbReference type="InterPro" id="IPR035961">
    <property type="entry name" value="Rhabdovirus_nucleoprotein-like"/>
</dbReference>
<dbReference type="Pfam" id="PF00945">
    <property type="entry name" value="Rhabdo_ncap"/>
    <property type="match status" value="1"/>
</dbReference>
<dbReference type="SUPFAM" id="SSF140809">
    <property type="entry name" value="Rhabdovirus nucleoprotein-like"/>
    <property type="match status" value="1"/>
</dbReference>
<organism>
    <name type="scientific">Rabies virus (strain HEP-Flury)</name>
    <name type="common">RABV</name>
    <dbReference type="NCBI Taxonomy" id="11296"/>
    <lineage>
        <taxon>Viruses</taxon>
        <taxon>Riboviria</taxon>
        <taxon>Orthornavirae</taxon>
        <taxon>Negarnaviricota</taxon>
        <taxon>Haploviricotina</taxon>
        <taxon>Monjiviricetes</taxon>
        <taxon>Mononegavirales</taxon>
        <taxon>Rhabdoviridae</taxon>
        <taxon>Alpharhabdovirinae</taxon>
        <taxon>Lyssavirus</taxon>
        <taxon>Lyssavirus rabies</taxon>
    </lineage>
</organism>
<evidence type="ECO:0000250" key="1"/>
<evidence type="ECO:0000305" key="2"/>
<gene>
    <name type="primary">N</name>
</gene>
<organismHost>
    <name type="scientific">Homo sapiens</name>
    <name type="common">Human</name>
    <dbReference type="NCBI Taxonomy" id="9606"/>
</organismHost>
<organismHost>
    <name type="scientific">Mammalia</name>
    <dbReference type="NCBI Taxonomy" id="40674"/>
</organismHost>
<feature type="chain" id="PRO_0000295210" description="Nucleoprotein">
    <location>
        <begin position="1"/>
        <end position="450"/>
    </location>
</feature>
<feature type="modified residue" description="Phosphoserine; by host CK2" evidence="1">
    <location>
        <position position="389"/>
    </location>
</feature>
<keyword id="KW-0167">Capsid protein</keyword>
<keyword id="KW-1139">Helical capsid protein</keyword>
<keyword id="KW-1035">Host cytoplasm</keyword>
<keyword id="KW-0597">Phosphoprotein</keyword>
<keyword id="KW-0687">Ribonucleoprotein</keyword>
<keyword id="KW-0694">RNA-binding</keyword>
<keyword id="KW-0766">Superantigen</keyword>
<keyword id="KW-0543">Viral nucleoprotein</keyword>
<keyword id="KW-0946">Virion</keyword>
<proteinExistence type="evidence at protein level"/>
<protein>
    <recommendedName>
        <fullName>Nucleoprotein</fullName>
        <shortName>NP</shortName>
    </recommendedName>
    <alternativeName>
        <fullName>Nucleocapsid protein</fullName>
        <shortName>Protein N</shortName>
    </alternativeName>
</protein>
<comment type="function">
    <text evidence="1">Encapsidates the genome in a ratio of one protein N per nine ribonucleotides, protecting it from nucleases. If expressed without protein P it binds non-specifically RNA and therefore can bind it's own mRNA. Interaction with protein P abolishes any non-specific RNA binding, and prevents phosphorylation. The soluble N-P complex encapsidates specifically the genomic RNA, with protein N protecting the genome like a pearl necklace. The encapsidated genomic RNA is termed the nucleocapsid (NC) and serves as template for viral transcription and replication. Protein N binds protein P in the NC through a different interaction, and can be phosphorylated. Subsequent viral replication is dependent on intracellular concentration of newly synthesized protein N. During replication, encapsidation by protein N is coupled to RNA synthesis and all replicative products are resistant to nucleases (By similarity).</text>
</comment>
<comment type="subunit">
    <text evidence="1">Homomultimerizes to form the nucleocapsid. Binds to viral genomic RNA. In nucleocapsid, binds protein P and thereby positions the polymerase on the template. Protein P acts as a chaperone on free protein N to prevent it from aggregation before encapsidating genomic RNA (By similarity).</text>
</comment>
<comment type="subcellular location">
    <subcellularLocation>
        <location>Virion</location>
    </subcellularLocation>
    <subcellularLocation>
        <location evidence="1">Host cytoplasm</location>
    </subcellularLocation>
</comment>
<comment type="PTM">
    <text evidence="1">Phosphorylated by host CK2. Unphosphorylated protein N seems to have a better affinity for leader viral promoter encapsidation. Phosphorylation of protein N in ribonucleocapsid may stabilize the interaction with protein P, thereby playing an important role in viral transcription/replication (By similarity).</text>
</comment>
<comment type="miscellaneous">
    <text evidence="1">Displays a superantigen activity in human and mouse, activating mostly V-beta-8 subtypes of T-cell receptor.</text>
</comment>
<comment type="similarity">
    <text evidence="2">Belongs to the lyssavirus nucleocapsid protein family.</text>
</comment>
<reference key="1">
    <citation type="journal article" date="2003" name="J. Virol. Methods">
        <title>An improved method for recovering rabies virus from cloned cDNA.</title>
        <authorList>
            <person name="Inoue K."/>
            <person name="Shoji Y."/>
            <person name="Kurane I."/>
            <person name="Iijima T."/>
            <person name="Sakai T."/>
            <person name="Morimoto K."/>
        </authorList>
    </citation>
    <scope>NUCLEOTIDE SEQUENCE [GENOMIC RNA]</scope>
</reference>
<reference key="2">
    <citation type="journal article" date="2004" name="Microbiol. Immunol.">
        <title>Association of rabies virus nominal phosphoprotein (P) with viral nucleocapsid (NC) is enhanced by phosphorylation of the viral nucleoprotein (N).</title>
        <authorList>
            <person name="Toriumi H."/>
            <person name="Kawai A."/>
        </authorList>
    </citation>
    <scope>INTERACTION WITH PROTEIN P</scope>
</reference>
<accession>Q8B6J9</accession>